<protein>
    <recommendedName>
        <fullName evidence="1">DNA-directed RNA polymerase subunit beta'</fullName>
        <shortName evidence="1">RNAP subunit beta'</shortName>
        <ecNumber evidence="1">2.7.7.6</ecNumber>
    </recommendedName>
    <alternativeName>
        <fullName evidence="1">RNA polymerase subunit beta'</fullName>
    </alternativeName>
    <alternativeName>
        <fullName evidence="1">Transcriptase subunit beta'</fullName>
    </alternativeName>
</protein>
<evidence type="ECO:0000255" key="1">
    <source>
        <dbReference type="HAMAP-Rule" id="MF_01322"/>
    </source>
</evidence>
<proteinExistence type="inferred from homology"/>
<name>RPOC_SHEHH</name>
<dbReference type="EC" id="2.7.7.6" evidence="1"/>
<dbReference type="EMBL" id="CP000931">
    <property type="protein sequence ID" value="ABZ78680.1"/>
    <property type="molecule type" value="Genomic_DNA"/>
</dbReference>
<dbReference type="RefSeq" id="WP_012279185.1">
    <property type="nucleotide sequence ID" value="NC_010334.1"/>
</dbReference>
<dbReference type="SMR" id="B0TM18"/>
<dbReference type="STRING" id="458817.Shal_4140"/>
<dbReference type="KEGG" id="shl:Shal_4140"/>
<dbReference type="eggNOG" id="COG0086">
    <property type="taxonomic scope" value="Bacteria"/>
</dbReference>
<dbReference type="HOGENOM" id="CLU_000524_3_1_6"/>
<dbReference type="OrthoDB" id="9815296at2"/>
<dbReference type="Proteomes" id="UP000001317">
    <property type="component" value="Chromosome"/>
</dbReference>
<dbReference type="GO" id="GO:0000428">
    <property type="term" value="C:DNA-directed RNA polymerase complex"/>
    <property type="evidence" value="ECO:0007669"/>
    <property type="project" value="UniProtKB-KW"/>
</dbReference>
<dbReference type="GO" id="GO:0003677">
    <property type="term" value="F:DNA binding"/>
    <property type="evidence" value="ECO:0007669"/>
    <property type="project" value="UniProtKB-UniRule"/>
</dbReference>
<dbReference type="GO" id="GO:0003899">
    <property type="term" value="F:DNA-directed RNA polymerase activity"/>
    <property type="evidence" value="ECO:0007669"/>
    <property type="project" value="UniProtKB-UniRule"/>
</dbReference>
<dbReference type="GO" id="GO:0000287">
    <property type="term" value="F:magnesium ion binding"/>
    <property type="evidence" value="ECO:0007669"/>
    <property type="project" value="UniProtKB-UniRule"/>
</dbReference>
<dbReference type="GO" id="GO:0008270">
    <property type="term" value="F:zinc ion binding"/>
    <property type="evidence" value="ECO:0007669"/>
    <property type="project" value="UniProtKB-UniRule"/>
</dbReference>
<dbReference type="GO" id="GO:0006351">
    <property type="term" value="P:DNA-templated transcription"/>
    <property type="evidence" value="ECO:0007669"/>
    <property type="project" value="UniProtKB-UniRule"/>
</dbReference>
<dbReference type="CDD" id="cd02655">
    <property type="entry name" value="RNAP_beta'_C"/>
    <property type="match status" value="1"/>
</dbReference>
<dbReference type="CDD" id="cd01609">
    <property type="entry name" value="RNAP_beta'_N"/>
    <property type="match status" value="1"/>
</dbReference>
<dbReference type="FunFam" id="1.10.132.30:FF:000003">
    <property type="entry name" value="DNA-directed RNA polymerase subunit beta"/>
    <property type="match status" value="1"/>
</dbReference>
<dbReference type="FunFam" id="1.10.150.390:FF:000002">
    <property type="entry name" value="DNA-directed RNA polymerase subunit beta"/>
    <property type="match status" value="1"/>
</dbReference>
<dbReference type="FunFam" id="1.10.40.90:FF:000001">
    <property type="entry name" value="DNA-directed RNA polymerase subunit beta"/>
    <property type="match status" value="1"/>
</dbReference>
<dbReference type="FunFam" id="4.10.860.120:FF:000001">
    <property type="entry name" value="DNA-directed RNA polymerase subunit beta"/>
    <property type="match status" value="1"/>
</dbReference>
<dbReference type="Gene3D" id="1.10.132.30">
    <property type="match status" value="1"/>
</dbReference>
<dbReference type="Gene3D" id="1.10.150.390">
    <property type="match status" value="1"/>
</dbReference>
<dbReference type="Gene3D" id="1.10.1790.20">
    <property type="match status" value="1"/>
</dbReference>
<dbReference type="Gene3D" id="1.10.40.90">
    <property type="match status" value="1"/>
</dbReference>
<dbReference type="Gene3D" id="2.40.40.20">
    <property type="match status" value="1"/>
</dbReference>
<dbReference type="Gene3D" id="2.40.50.100">
    <property type="match status" value="3"/>
</dbReference>
<dbReference type="Gene3D" id="4.10.860.120">
    <property type="entry name" value="RNA polymerase II, clamp domain"/>
    <property type="match status" value="1"/>
</dbReference>
<dbReference type="Gene3D" id="1.10.274.100">
    <property type="entry name" value="RNA polymerase Rpb1, domain 3"/>
    <property type="match status" value="1"/>
</dbReference>
<dbReference type="HAMAP" id="MF_01322">
    <property type="entry name" value="RNApol_bact_RpoC"/>
    <property type="match status" value="1"/>
</dbReference>
<dbReference type="InterPro" id="IPR045867">
    <property type="entry name" value="DNA-dir_RpoC_beta_prime"/>
</dbReference>
<dbReference type="InterPro" id="IPR012754">
    <property type="entry name" value="DNA-dir_RpoC_beta_prime_bact"/>
</dbReference>
<dbReference type="InterPro" id="IPR000722">
    <property type="entry name" value="RNA_pol_asu"/>
</dbReference>
<dbReference type="InterPro" id="IPR006592">
    <property type="entry name" value="RNA_pol_N"/>
</dbReference>
<dbReference type="InterPro" id="IPR007080">
    <property type="entry name" value="RNA_pol_Rpb1_1"/>
</dbReference>
<dbReference type="InterPro" id="IPR007066">
    <property type="entry name" value="RNA_pol_Rpb1_3"/>
</dbReference>
<dbReference type="InterPro" id="IPR042102">
    <property type="entry name" value="RNA_pol_Rpb1_3_sf"/>
</dbReference>
<dbReference type="InterPro" id="IPR007083">
    <property type="entry name" value="RNA_pol_Rpb1_4"/>
</dbReference>
<dbReference type="InterPro" id="IPR007081">
    <property type="entry name" value="RNA_pol_Rpb1_5"/>
</dbReference>
<dbReference type="InterPro" id="IPR044893">
    <property type="entry name" value="RNA_pol_Rpb1_clamp_domain"/>
</dbReference>
<dbReference type="InterPro" id="IPR038120">
    <property type="entry name" value="Rpb1_funnel_sf"/>
</dbReference>
<dbReference type="NCBIfam" id="TIGR02386">
    <property type="entry name" value="rpoC_TIGR"/>
    <property type="match status" value="1"/>
</dbReference>
<dbReference type="PANTHER" id="PTHR19376">
    <property type="entry name" value="DNA-DIRECTED RNA POLYMERASE"/>
    <property type="match status" value="1"/>
</dbReference>
<dbReference type="PANTHER" id="PTHR19376:SF54">
    <property type="entry name" value="DNA-DIRECTED RNA POLYMERASE SUBUNIT BETA"/>
    <property type="match status" value="1"/>
</dbReference>
<dbReference type="Pfam" id="PF04997">
    <property type="entry name" value="RNA_pol_Rpb1_1"/>
    <property type="match status" value="1"/>
</dbReference>
<dbReference type="Pfam" id="PF00623">
    <property type="entry name" value="RNA_pol_Rpb1_2"/>
    <property type="match status" value="2"/>
</dbReference>
<dbReference type="Pfam" id="PF04983">
    <property type="entry name" value="RNA_pol_Rpb1_3"/>
    <property type="match status" value="1"/>
</dbReference>
<dbReference type="Pfam" id="PF05000">
    <property type="entry name" value="RNA_pol_Rpb1_4"/>
    <property type="match status" value="1"/>
</dbReference>
<dbReference type="Pfam" id="PF04998">
    <property type="entry name" value="RNA_pol_Rpb1_5"/>
    <property type="match status" value="1"/>
</dbReference>
<dbReference type="SMART" id="SM00663">
    <property type="entry name" value="RPOLA_N"/>
    <property type="match status" value="1"/>
</dbReference>
<dbReference type="SUPFAM" id="SSF64484">
    <property type="entry name" value="beta and beta-prime subunits of DNA dependent RNA-polymerase"/>
    <property type="match status" value="1"/>
</dbReference>
<gene>
    <name evidence="1" type="primary">rpoC</name>
    <name type="ordered locus">Shal_4140</name>
</gene>
<feature type="chain" id="PRO_1000086417" description="DNA-directed RNA polymerase subunit beta'">
    <location>
        <begin position="1"/>
        <end position="1404"/>
    </location>
</feature>
<feature type="binding site" evidence="1">
    <location>
        <position position="70"/>
    </location>
    <ligand>
        <name>Zn(2+)</name>
        <dbReference type="ChEBI" id="CHEBI:29105"/>
        <label>1</label>
    </ligand>
</feature>
<feature type="binding site" evidence="1">
    <location>
        <position position="72"/>
    </location>
    <ligand>
        <name>Zn(2+)</name>
        <dbReference type="ChEBI" id="CHEBI:29105"/>
        <label>1</label>
    </ligand>
</feature>
<feature type="binding site" evidence="1">
    <location>
        <position position="85"/>
    </location>
    <ligand>
        <name>Zn(2+)</name>
        <dbReference type="ChEBI" id="CHEBI:29105"/>
        <label>1</label>
    </ligand>
</feature>
<feature type="binding site" evidence="1">
    <location>
        <position position="88"/>
    </location>
    <ligand>
        <name>Zn(2+)</name>
        <dbReference type="ChEBI" id="CHEBI:29105"/>
        <label>1</label>
    </ligand>
</feature>
<feature type="binding site" evidence="1">
    <location>
        <position position="460"/>
    </location>
    <ligand>
        <name>Mg(2+)</name>
        <dbReference type="ChEBI" id="CHEBI:18420"/>
    </ligand>
</feature>
<feature type="binding site" evidence="1">
    <location>
        <position position="462"/>
    </location>
    <ligand>
        <name>Mg(2+)</name>
        <dbReference type="ChEBI" id="CHEBI:18420"/>
    </ligand>
</feature>
<feature type="binding site" evidence="1">
    <location>
        <position position="464"/>
    </location>
    <ligand>
        <name>Mg(2+)</name>
        <dbReference type="ChEBI" id="CHEBI:18420"/>
    </ligand>
</feature>
<feature type="binding site" evidence="1">
    <location>
        <position position="814"/>
    </location>
    <ligand>
        <name>Zn(2+)</name>
        <dbReference type="ChEBI" id="CHEBI:29105"/>
        <label>2</label>
    </ligand>
</feature>
<feature type="binding site" evidence="1">
    <location>
        <position position="888"/>
    </location>
    <ligand>
        <name>Zn(2+)</name>
        <dbReference type="ChEBI" id="CHEBI:29105"/>
        <label>2</label>
    </ligand>
</feature>
<feature type="binding site" evidence="1">
    <location>
        <position position="895"/>
    </location>
    <ligand>
        <name>Zn(2+)</name>
        <dbReference type="ChEBI" id="CHEBI:29105"/>
        <label>2</label>
    </ligand>
</feature>
<feature type="binding site" evidence="1">
    <location>
        <position position="898"/>
    </location>
    <ligand>
        <name>Zn(2+)</name>
        <dbReference type="ChEBI" id="CHEBI:29105"/>
        <label>2</label>
    </ligand>
</feature>
<organism>
    <name type="scientific">Shewanella halifaxensis (strain HAW-EB4)</name>
    <dbReference type="NCBI Taxonomy" id="458817"/>
    <lineage>
        <taxon>Bacteria</taxon>
        <taxon>Pseudomonadati</taxon>
        <taxon>Pseudomonadota</taxon>
        <taxon>Gammaproteobacteria</taxon>
        <taxon>Alteromonadales</taxon>
        <taxon>Shewanellaceae</taxon>
        <taxon>Shewanella</taxon>
    </lineage>
</organism>
<keyword id="KW-0240">DNA-directed RNA polymerase</keyword>
<keyword id="KW-0460">Magnesium</keyword>
<keyword id="KW-0479">Metal-binding</keyword>
<keyword id="KW-0548">Nucleotidyltransferase</keyword>
<keyword id="KW-0804">Transcription</keyword>
<keyword id="KW-0808">Transferase</keyword>
<keyword id="KW-0862">Zinc</keyword>
<comment type="function">
    <text evidence="1">DNA-dependent RNA polymerase catalyzes the transcription of DNA into RNA using the four ribonucleoside triphosphates as substrates.</text>
</comment>
<comment type="catalytic activity">
    <reaction evidence="1">
        <text>RNA(n) + a ribonucleoside 5'-triphosphate = RNA(n+1) + diphosphate</text>
        <dbReference type="Rhea" id="RHEA:21248"/>
        <dbReference type="Rhea" id="RHEA-COMP:14527"/>
        <dbReference type="Rhea" id="RHEA-COMP:17342"/>
        <dbReference type="ChEBI" id="CHEBI:33019"/>
        <dbReference type="ChEBI" id="CHEBI:61557"/>
        <dbReference type="ChEBI" id="CHEBI:140395"/>
        <dbReference type="EC" id="2.7.7.6"/>
    </reaction>
</comment>
<comment type="cofactor">
    <cofactor evidence="1">
        <name>Mg(2+)</name>
        <dbReference type="ChEBI" id="CHEBI:18420"/>
    </cofactor>
    <text evidence="1">Binds 1 Mg(2+) ion per subunit.</text>
</comment>
<comment type="cofactor">
    <cofactor evidence="1">
        <name>Zn(2+)</name>
        <dbReference type="ChEBI" id="CHEBI:29105"/>
    </cofactor>
    <text evidence="1">Binds 2 Zn(2+) ions per subunit.</text>
</comment>
<comment type="subunit">
    <text evidence="1">The RNAP catalytic core consists of 2 alpha, 1 beta, 1 beta' and 1 omega subunit. When a sigma factor is associated with the core the holoenzyme is formed, which can initiate transcription.</text>
</comment>
<comment type="similarity">
    <text evidence="1">Belongs to the RNA polymerase beta' chain family.</text>
</comment>
<accession>B0TM18</accession>
<reference key="1">
    <citation type="submission" date="2008-01" db="EMBL/GenBank/DDBJ databases">
        <title>Complete sequence of Shewanella halifaxensis HAW-EB4.</title>
        <authorList>
            <consortium name="US DOE Joint Genome Institute"/>
            <person name="Copeland A."/>
            <person name="Lucas S."/>
            <person name="Lapidus A."/>
            <person name="Glavina del Rio T."/>
            <person name="Dalin E."/>
            <person name="Tice H."/>
            <person name="Bruce D."/>
            <person name="Goodwin L."/>
            <person name="Pitluck S."/>
            <person name="Sims D."/>
            <person name="Brettin T."/>
            <person name="Detter J.C."/>
            <person name="Han C."/>
            <person name="Kuske C.R."/>
            <person name="Schmutz J."/>
            <person name="Larimer F."/>
            <person name="Land M."/>
            <person name="Hauser L."/>
            <person name="Kyrpides N."/>
            <person name="Kim E."/>
            <person name="Zhao J.-S."/>
            <person name="Richardson P."/>
        </authorList>
    </citation>
    <scope>NUCLEOTIDE SEQUENCE [LARGE SCALE GENOMIC DNA]</scope>
    <source>
        <strain>HAW-EB4</strain>
    </source>
</reference>
<sequence>MKDLLKFLKQQSKTEEFDGIKIGLASPDLIRSWSFGEVKKPETINYRTFKPEREGLFCARIFGPVKDYECLCGKYKRLKHRGVICEKCGVEVTQTKVRRERMGHIDLASPVAHIWFLKSLPSRIGLMLDMTLRDIERVLYFESFVVIEPGMTSLERGQMLTEENYLDALEEYGDEFDAKMGAEAVLELLRAIDLEKEIEMMREELPSINSETRRKKVTKRLKLVEAFFTSGNKPEWMILKVLPVLPPDLRPLVPLDGGRFATSDLNDLYRRVINRNNRLKRLLDLAAPDIIVRNEKRMLQESVDALLDNGRRGRAITGSNKRPLKSLADMIKGKQGRFRQNLLGKRVDYSGRSVITVGPTLRLHQCGLPKKMALELFKPFIYGKLEGRGLATTIKAAKKMVEREVPEVWDVLDDVIREHPVMLNRAPTLHRLGIQAFEPVLIEGKAIQLHPLVCAAYNADFDGDQMAVHVPLTLEAQLEARSLMMSTNNILSPANGEPVITPSQDVVLGLYYTSRERINGKGEGMAFSDVAEAEKAYRTGVAELHARVKVRITETATNEAGEKVKTRRIVDTTVGRALLSQILPKGLSYDLVNQNMGKKQISKLLNTCYRQLGLKDTVIFADQLMYTGFHFATISGASVGIDDMVIPDEKYTLVADAEAEVLEIQEQFQSGLVTAGERYNKVIDIWASANEKVSKAMMANLSKETVINRDGEEEQQESFNSIYMMADSGARGSAAQIRQLAGMRGLMAKPDGSIIETPIVANFREGLNVSQYFISTHGARKGLADTALKTANSGYLTRRLVDVAQDLVVIEDDCGTFEGLTMKPLIEGGDVVEPLRERVLGRVVAQDVFKPGTAEVLVPRNTLLDEAWCDIIEDNSIDEMIVRSVISCDTDFGVCKFCYGRDLARGHIINQGEAIGVVAAQSIGEPGTQLTMRTFHIGGAASRASAENNVQVKNSGTLKLHNAKFVTNSNGKLVIVSRSSELAIIDELGREKERYKVPYGTVLEKLEDDGVAAGEIIAKWDPHTHPIITEVAGSIKFVDMIEGVTMTRQTDELTGLSSIVVLEVGQRPTAGKEMRPMIRLVAADGSDLMIPGTEVPAQYFLPGHAIVNLDDNAPINVGDALARIPQESSKTRDITGGLPRVADLFEARKPKEPAILAEVSGTISFGKETKGKRRLVITPADGGEHYEEMIPKWRNLNVFEGEKVERGEVIADGAEAAHDILRLRGIHNVANYIVNEVQDVYRLQGVKINDKHIEVIIRQMLRKCEIVDAGDSEFLPGEQAEVSRVKIANRELEAQGKQPATFERELLGITKASLATESFISAASFQETTRVLTEAAVGGKSDKLRGLKENVIVGRLIPAGTGYSYHQKRAEAAAKPAVTEATSISASEAEQNLADLLNLAGSND</sequence>